<feature type="chain" id="PRO_1000127427" description="Large ribosomal subunit protein bL35">
    <location>
        <begin position="1"/>
        <end position="65"/>
    </location>
</feature>
<sequence>MPKIKTNRAAAKRFRKTASGKYKCGHANRSHILTKKATKRKRNLRQTNHVRAEDAGRLDRMLPYL</sequence>
<name>RL35_XANCB</name>
<keyword id="KW-0687">Ribonucleoprotein</keyword>
<keyword id="KW-0689">Ribosomal protein</keyword>
<dbReference type="EMBL" id="AM920689">
    <property type="protein sequence ID" value="CAP51056.1"/>
    <property type="molecule type" value="Genomic_DNA"/>
</dbReference>
<dbReference type="SMR" id="B0RRH1"/>
<dbReference type="KEGG" id="xca:xcc-b100_1706"/>
<dbReference type="HOGENOM" id="CLU_169643_4_3_6"/>
<dbReference type="Proteomes" id="UP000001188">
    <property type="component" value="Chromosome"/>
</dbReference>
<dbReference type="GO" id="GO:0022625">
    <property type="term" value="C:cytosolic large ribosomal subunit"/>
    <property type="evidence" value="ECO:0007669"/>
    <property type="project" value="TreeGrafter"/>
</dbReference>
<dbReference type="GO" id="GO:0003735">
    <property type="term" value="F:structural constituent of ribosome"/>
    <property type="evidence" value="ECO:0007669"/>
    <property type="project" value="InterPro"/>
</dbReference>
<dbReference type="GO" id="GO:0006412">
    <property type="term" value="P:translation"/>
    <property type="evidence" value="ECO:0007669"/>
    <property type="project" value="UniProtKB-UniRule"/>
</dbReference>
<dbReference type="FunFam" id="4.10.410.60:FF:000001">
    <property type="entry name" value="50S ribosomal protein L35"/>
    <property type="match status" value="1"/>
</dbReference>
<dbReference type="Gene3D" id="4.10.410.60">
    <property type="match status" value="1"/>
</dbReference>
<dbReference type="HAMAP" id="MF_00514">
    <property type="entry name" value="Ribosomal_bL35"/>
    <property type="match status" value="1"/>
</dbReference>
<dbReference type="InterPro" id="IPR001706">
    <property type="entry name" value="Ribosomal_bL35"/>
</dbReference>
<dbReference type="InterPro" id="IPR021137">
    <property type="entry name" value="Ribosomal_bL35-like"/>
</dbReference>
<dbReference type="InterPro" id="IPR018265">
    <property type="entry name" value="Ribosomal_bL35_CS"/>
</dbReference>
<dbReference type="InterPro" id="IPR037229">
    <property type="entry name" value="Ribosomal_bL35_sf"/>
</dbReference>
<dbReference type="NCBIfam" id="TIGR00001">
    <property type="entry name" value="rpmI_bact"/>
    <property type="match status" value="1"/>
</dbReference>
<dbReference type="PANTHER" id="PTHR33343">
    <property type="entry name" value="54S RIBOSOMAL PROTEIN BL35M"/>
    <property type="match status" value="1"/>
</dbReference>
<dbReference type="PANTHER" id="PTHR33343:SF1">
    <property type="entry name" value="LARGE RIBOSOMAL SUBUNIT PROTEIN BL35M"/>
    <property type="match status" value="1"/>
</dbReference>
<dbReference type="Pfam" id="PF01632">
    <property type="entry name" value="Ribosomal_L35p"/>
    <property type="match status" value="1"/>
</dbReference>
<dbReference type="PRINTS" id="PR00064">
    <property type="entry name" value="RIBOSOMALL35"/>
</dbReference>
<dbReference type="SUPFAM" id="SSF143034">
    <property type="entry name" value="L35p-like"/>
    <property type="match status" value="1"/>
</dbReference>
<dbReference type="PROSITE" id="PS00936">
    <property type="entry name" value="RIBOSOMAL_L35"/>
    <property type="match status" value="1"/>
</dbReference>
<accession>B0RRH1</accession>
<protein>
    <recommendedName>
        <fullName evidence="1">Large ribosomal subunit protein bL35</fullName>
    </recommendedName>
    <alternativeName>
        <fullName evidence="2">50S ribosomal protein L35</fullName>
    </alternativeName>
</protein>
<comment type="similarity">
    <text evidence="1">Belongs to the bacterial ribosomal protein bL35 family.</text>
</comment>
<proteinExistence type="inferred from homology"/>
<gene>
    <name evidence="1" type="primary">rpmI</name>
    <name type="ordered locus">xcc-b100_1706</name>
</gene>
<organism>
    <name type="scientific">Xanthomonas campestris pv. campestris (strain B100)</name>
    <dbReference type="NCBI Taxonomy" id="509169"/>
    <lineage>
        <taxon>Bacteria</taxon>
        <taxon>Pseudomonadati</taxon>
        <taxon>Pseudomonadota</taxon>
        <taxon>Gammaproteobacteria</taxon>
        <taxon>Lysobacterales</taxon>
        <taxon>Lysobacteraceae</taxon>
        <taxon>Xanthomonas</taxon>
    </lineage>
</organism>
<reference key="1">
    <citation type="journal article" date="2008" name="J. Biotechnol.">
        <title>The genome of Xanthomonas campestris pv. campestris B100 and its use for the reconstruction of metabolic pathways involved in xanthan biosynthesis.</title>
        <authorList>
            <person name="Vorhoelter F.-J."/>
            <person name="Schneiker S."/>
            <person name="Goesmann A."/>
            <person name="Krause L."/>
            <person name="Bekel T."/>
            <person name="Kaiser O."/>
            <person name="Linke B."/>
            <person name="Patschkowski T."/>
            <person name="Rueckert C."/>
            <person name="Schmid J."/>
            <person name="Sidhu V.K."/>
            <person name="Sieber V."/>
            <person name="Tauch A."/>
            <person name="Watt S.A."/>
            <person name="Weisshaar B."/>
            <person name="Becker A."/>
            <person name="Niehaus K."/>
            <person name="Puehler A."/>
        </authorList>
    </citation>
    <scope>NUCLEOTIDE SEQUENCE [LARGE SCALE GENOMIC DNA]</scope>
    <source>
        <strain>B100</strain>
    </source>
</reference>
<evidence type="ECO:0000255" key="1">
    <source>
        <dbReference type="HAMAP-Rule" id="MF_00514"/>
    </source>
</evidence>
<evidence type="ECO:0000305" key="2"/>